<dbReference type="EMBL" id="AE017197">
    <property type="protein sequence ID" value="AAU04096.1"/>
    <property type="molecule type" value="Genomic_DNA"/>
</dbReference>
<dbReference type="RefSeq" id="WP_011191075.1">
    <property type="nucleotide sequence ID" value="NC_006142.1"/>
</dbReference>
<dbReference type="SMR" id="Q68W96"/>
<dbReference type="KEGG" id="rty:RT0633"/>
<dbReference type="eggNOG" id="COG1841">
    <property type="taxonomic scope" value="Bacteria"/>
</dbReference>
<dbReference type="HOGENOM" id="CLU_131047_1_5_5"/>
<dbReference type="OrthoDB" id="9812790at2"/>
<dbReference type="Proteomes" id="UP000000604">
    <property type="component" value="Chromosome"/>
</dbReference>
<dbReference type="GO" id="GO:0022625">
    <property type="term" value="C:cytosolic large ribosomal subunit"/>
    <property type="evidence" value="ECO:0007669"/>
    <property type="project" value="TreeGrafter"/>
</dbReference>
<dbReference type="GO" id="GO:0003735">
    <property type="term" value="F:structural constituent of ribosome"/>
    <property type="evidence" value="ECO:0007669"/>
    <property type="project" value="InterPro"/>
</dbReference>
<dbReference type="GO" id="GO:0006412">
    <property type="term" value="P:translation"/>
    <property type="evidence" value="ECO:0007669"/>
    <property type="project" value="UniProtKB-UniRule"/>
</dbReference>
<dbReference type="CDD" id="cd01658">
    <property type="entry name" value="Ribosomal_L30"/>
    <property type="match status" value="1"/>
</dbReference>
<dbReference type="Gene3D" id="3.30.1390.20">
    <property type="entry name" value="Ribosomal protein L30, ferredoxin-like fold domain"/>
    <property type="match status" value="1"/>
</dbReference>
<dbReference type="HAMAP" id="MF_01371_B">
    <property type="entry name" value="Ribosomal_uL30_B"/>
    <property type="match status" value="1"/>
</dbReference>
<dbReference type="InterPro" id="IPR036919">
    <property type="entry name" value="Ribo_uL30_ferredoxin-like_sf"/>
</dbReference>
<dbReference type="InterPro" id="IPR005996">
    <property type="entry name" value="Ribosomal_uL30_bac-type"/>
</dbReference>
<dbReference type="InterPro" id="IPR016082">
    <property type="entry name" value="Ribosomal_uL30_ferredoxin-like"/>
</dbReference>
<dbReference type="NCBIfam" id="TIGR01308">
    <property type="entry name" value="rpmD_bact"/>
    <property type="match status" value="1"/>
</dbReference>
<dbReference type="PANTHER" id="PTHR15892:SF2">
    <property type="entry name" value="LARGE RIBOSOMAL SUBUNIT PROTEIN UL30M"/>
    <property type="match status" value="1"/>
</dbReference>
<dbReference type="PANTHER" id="PTHR15892">
    <property type="entry name" value="MITOCHONDRIAL RIBOSOMAL PROTEIN L30"/>
    <property type="match status" value="1"/>
</dbReference>
<dbReference type="Pfam" id="PF00327">
    <property type="entry name" value="Ribosomal_L30"/>
    <property type="match status" value="1"/>
</dbReference>
<dbReference type="PIRSF" id="PIRSF002211">
    <property type="entry name" value="Ribosomal_L30_bac-type"/>
    <property type="match status" value="1"/>
</dbReference>
<dbReference type="SUPFAM" id="SSF55129">
    <property type="entry name" value="Ribosomal protein L30p/L7e"/>
    <property type="match status" value="1"/>
</dbReference>
<evidence type="ECO:0000255" key="1">
    <source>
        <dbReference type="HAMAP-Rule" id="MF_01371"/>
    </source>
</evidence>
<evidence type="ECO:0000305" key="2"/>
<proteinExistence type="inferred from homology"/>
<organism>
    <name type="scientific">Rickettsia typhi (strain ATCC VR-144 / Wilmington)</name>
    <dbReference type="NCBI Taxonomy" id="257363"/>
    <lineage>
        <taxon>Bacteria</taxon>
        <taxon>Pseudomonadati</taxon>
        <taxon>Pseudomonadota</taxon>
        <taxon>Alphaproteobacteria</taxon>
        <taxon>Rickettsiales</taxon>
        <taxon>Rickettsiaceae</taxon>
        <taxon>Rickettsieae</taxon>
        <taxon>Rickettsia</taxon>
        <taxon>typhus group</taxon>
    </lineage>
</organism>
<gene>
    <name evidence="1" type="primary">rpmD</name>
    <name type="ordered locus">RT0633</name>
</gene>
<sequence length="63" mass="7109">MNNKVNNIKITQIKSAIGCKYDQRLTLIGLGLNKINKSVILENTNSIKGMVKKVKHLLEIKNM</sequence>
<accession>Q68W96</accession>
<feature type="chain" id="PRO_0000274841" description="Large ribosomal subunit protein uL30">
    <location>
        <begin position="1"/>
        <end position="63"/>
    </location>
</feature>
<name>RL30_RICTY</name>
<reference key="1">
    <citation type="journal article" date="2004" name="J. Bacteriol.">
        <title>Complete genome sequence of Rickettsia typhi and comparison with sequences of other Rickettsiae.</title>
        <authorList>
            <person name="McLeod M.P."/>
            <person name="Qin X."/>
            <person name="Karpathy S.E."/>
            <person name="Gioia J."/>
            <person name="Highlander S.K."/>
            <person name="Fox G.E."/>
            <person name="McNeill T.Z."/>
            <person name="Jiang H."/>
            <person name="Muzny D."/>
            <person name="Jacob L.S."/>
            <person name="Hawes A.C."/>
            <person name="Sodergren E."/>
            <person name="Gill R."/>
            <person name="Hume J."/>
            <person name="Morgan M."/>
            <person name="Fan G."/>
            <person name="Amin A.G."/>
            <person name="Gibbs R.A."/>
            <person name="Hong C."/>
            <person name="Yu X.-J."/>
            <person name="Walker D.H."/>
            <person name="Weinstock G.M."/>
        </authorList>
    </citation>
    <scope>NUCLEOTIDE SEQUENCE [LARGE SCALE GENOMIC DNA]</scope>
    <source>
        <strain>ATCC VR-144 / Wilmington</strain>
    </source>
</reference>
<protein>
    <recommendedName>
        <fullName evidence="1">Large ribosomal subunit protein uL30</fullName>
    </recommendedName>
    <alternativeName>
        <fullName evidence="2">50S ribosomal protein L30</fullName>
    </alternativeName>
</protein>
<keyword id="KW-0687">Ribonucleoprotein</keyword>
<keyword id="KW-0689">Ribosomal protein</keyword>
<comment type="subunit">
    <text evidence="1">Part of the 50S ribosomal subunit.</text>
</comment>
<comment type="similarity">
    <text evidence="1">Belongs to the universal ribosomal protein uL30 family.</text>
</comment>